<gene>
    <name evidence="1" type="primary">rplR</name>
    <name type="ordered locus">CPS_0617</name>
</gene>
<reference key="1">
    <citation type="journal article" date="2005" name="Proc. Natl. Acad. Sci. U.S.A.">
        <title>The psychrophilic lifestyle as revealed by the genome sequence of Colwellia psychrerythraea 34H through genomic and proteomic analyses.</title>
        <authorList>
            <person name="Methe B.A."/>
            <person name="Nelson K.E."/>
            <person name="Deming J.W."/>
            <person name="Momen B."/>
            <person name="Melamud E."/>
            <person name="Zhang X."/>
            <person name="Moult J."/>
            <person name="Madupu R."/>
            <person name="Nelson W.C."/>
            <person name="Dodson R.J."/>
            <person name="Brinkac L.M."/>
            <person name="Daugherty S.C."/>
            <person name="Durkin A.S."/>
            <person name="DeBoy R.T."/>
            <person name="Kolonay J.F."/>
            <person name="Sullivan S.A."/>
            <person name="Zhou L."/>
            <person name="Davidsen T.M."/>
            <person name="Wu M."/>
            <person name="Huston A.L."/>
            <person name="Lewis M."/>
            <person name="Weaver B."/>
            <person name="Weidman J.F."/>
            <person name="Khouri H."/>
            <person name="Utterback T.R."/>
            <person name="Feldblyum T.V."/>
            <person name="Fraser C.M."/>
        </authorList>
    </citation>
    <scope>NUCLEOTIDE SEQUENCE [LARGE SCALE GENOMIC DNA]</scope>
    <source>
        <strain>34H / ATCC BAA-681</strain>
    </source>
</reference>
<feature type="chain" id="PRO_0000251302" description="Large ribosomal subunit protein uL18">
    <location>
        <begin position="1"/>
        <end position="117"/>
    </location>
</feature>
<evidence type="ECO:0000255" key="1">
    <source>
        <dbReference type="HAMAP-Rule" id="MF_01337"/>
    </source>
</evidence>
<evidence type="ECO:0000305" key="2"/>
<protein>
    <recommendedName>
        <fullName evidence="1">Large ribosomal subunit protein uL18</fullName>
    </recommendedName>
    <alternativeName>
        <fullName evidence="2">50S ribosomal protein L18</fullName>
    </alternativeName>
</protein>
<sequence>MDKRSSRLRRAKRARAKISELGANRLVIFRTPRHIYAQLIAPTGSEVIASASTLDKEVSAQIEKTGNVAAATAVGKAIAERAVAKGITKIAFDRSGFLYHGRVKALAEAAREAGLQF</sequence>
<proteinExistence type="inferred from homology"/>
<name>RL18_COLP3</name>
<keyword id="KW-0687">Ribonucleoprotein</keyword>
<keyword id="KW-0689">Ribosomal protein</keyword>
<keyword id="KW-0694">RNA-binding</keyword>
<keyword id="KW-0699">rRNA-binding</keyword>
<dbReference type="EMBL" id="CP000083">
    <property type="protein sequence ID" value="AAZ26308.1"/>
    <property type="molecule type" value="Genomic_DNA"/>
</dbReference>
<dbReference type="RefSeq" id="WP_011041467.1">
    <property type="nucleotide sequence ID" value="NC_003910.7"/>
</dbReference>
<dbReference type="SMR" id="Q488Z7"/>
<dbReference type="STRING" id="167879.CPS_0617"/>
<dbReference type="KEGG" id="cps:CPS_0617"/>
<dbReference type="eggNOG" id="COG0256">
    <property type="taxonomic scope" value="Bacteria"/>
</dbReference>
<dbReference type="HOGENOM" id="CLU_098841_0_1_6"/>
<dbReference type="Proteomes" id="UP000000547">
    <property type="component" value="Chromosome"/>
</dbReference>
<dbReference type="GO" id="GO:0022625">
    <property type="term" value="C:cytosolic large ribosomal subunit"/>
    <property type="evidence" value="ECO:0007669"/>
    <property type="project" value="TreeGrafter"/>
</dbReference>
<dbReference type="GO" id="GO:0008097">
    <property type="term" value="F:5S rRNA binding"/>
    <property type="evidence" value="ECO:0007669"/>
    <property type="project" value="TreeGrafter"/>
</dbReference>
<dbReference type="GO" id="GO:0003735">
    <property type="term" value="F:structural constituent of ribosome"/>
    <property type="evidence" value="ECO:0007669"/>
    <property type="project" value="InterPro"/>
</dbReference>
<dbReference type="GO" id="GO:0006412">
    <property type="term" value="P:translation"/>
    <property type="evidence" value="ECO:0007669"/>
    <property type="project" value="UniProtKB-UniRule"/>
</dbReference>
<dbReference type="CDD" id="cd00432">
    <property type="entry name" value="Ribosomal_L18_L5e"/>
    <property type="match status" value="1"/>
</dbReference>
<dbReference type="FunFam" id="3.30.420.100:FF:000001">
    <property type="entry name" value="50S ribosomal protein L18"/>
    <property type="match status" value="1"/>
</dbReference>
<dbReference type="Gene3D" id="3.30.420.100">
    <property type="match status" value="1"/>
</dbReference>
<dbReference type="HAMAP" id="MF_01337_B">
    <property type="entry name" value="Ribosomal_uL18_B"/>
    <property type="match status" value="1"/>
</dbReference>
<dbReference type="InterPro" id="IPR004389">
    <property type="entry name" value="Ribosomal_uL18_bac-type"/>
</dbReference>
<dbReference type="InterPro" id="IPR005484">
    <property type="entry name" value="Ribosomal_uL18_bac/euk"/>
</dbReference>
<dbReference type="NCBIfam" id="TIGR00060">
    <property type="entry name" value="L18_bact"/>
    <property type="match status" value="1"/>
</dbReference>
<dbReference type="PANTHER" id="PTHR12899">
    <property type="entry name" value="39S RIBOSOMAL PROTEIN L18, MITOCHONDRIAL"/>
    <property type="match status" value="1"/>
</dbReference>
<dbReference type="PANTHER" id="PTHR12899:SF3">
    <property type="entry name" value="LARGE RIBOSOMAL SUBUNIT PROTEIN UL18M"/>
    <property type="match status" value="1"/>
</dbReference>
<dbReference type="Pfam" id="PF00861">
    <property type="entry name" value="Ribosomal_L18p"/>
    <property type="match status" value="1"/>
</dbReference>
<dbReference type="SUPFAM" id="SSF53137">
    <property type="entry name" value="Translational machinery components"/>
    <property type="match status" value="1"/>
</dbReference>
<organism>
    <name type="scientific">Colwellia psychrerythraea (strain 34H / ATCC BAA-681)</name>
    <name type="common">Vibrio psychroerythus</name>
    <dbReference type="NCBI Taxonomy" id="167879"/>
    <lineage>
        <taxon>Bacteria</taxon>
        <taxon>Pseudomonadati</taxon>
        <taxon>Pseudomonadota</taxon>
        <taxon>Gammaproteobacteria</taxon>
        <taxon>Alteromonadales</taxon>
        <taxon>Colwelliaceae</taxon>
        <taxon>Colwellia</taxon>
    </lineage>
</organism>
<comment type="function">
    <text evidence="1">This is one of the proteins that bind and probably mediate the attachment of the 5S RNA into the large ribosomal subunit, where it forms part of the central protuberance.</text>
</comment>
<comment type="subunit">
    <text evidence="1">Part of the 50S ribosomal subunit; part of the 5S rRNA/L5/L18/L25 subcomplex. Contacts the 5S and 23S rRNAs.</text>
</comment>
<comment type="similarity">
    <text evidence="1">Belongs to the universal ribosomal protein uL18 family.</text>
</comment>
<accession>Q488Z7</accession>